<organism>
    <name type="scientific">Sulfurovum sp. (strain NBC37-1)</name>
    <dbReference type="NCBI Taxonomy" id="387093"/>
    <lineage>
        <taxon>Bacteria</taxon>
        <taxon>Pseudomonadati</taxon>
        <taxon>Campylobacterota</taxon>
        <taxon>Epsilonproteobacteria</taxon>
        <taxon>Campylobacterales</taxon>
        <taxon>Sulfurovaceae</taxon>
        <taxon>Sulfurovum</taxon>
    </lineage>
</organism>
<feature type="chain" id="PRO_1000001851" description="Phosphate acyltransferase">
    <location>
        <begin position="1"/>
        <end position="329"/>
    </location>
</feature>
<sequence length="329" mass="35553">MIRIAIDAMGGDFGPEPIIEGVVQALEEKTFQPILVGDKEEILSLLPQYYIDKVEIVEATDVIDMSDQATNALKRKDSSIYKAVELVRNKEADAVLSAGHSGATMTLATLRMGRLPHISKPALATLMPSLGKNKTLVLDVGAVTDCTPQNLYEFGAMGEAYVEKILNIRNPRVGLLSNGSEDSKGNALTKEAFVLLKNLRGFVGNVEGKDIFNGKVDVVVCDGFTGNIMLKASEGVVTTVFELMKQYIRKSLPAKIGALMMRKKVFANMKRQVDKDEYGGAPLLGVDGCAIVSHGASNAKAIKNAIFQAILFTESGVNSQIEELLSEKE</sequence>
<reference key="1">
    <citation type="journal article" date="2007" name="Proc. Natl. Acad. Sci. U.S.A.">
        <title>Deep-sea vent epsilon-proteobacterial genomes provide insights into emergence of pathogens.</title>
        <authorList>
            <person name="Nakagawa S."/>
            <person name="Takaki Y."/>
            <person name="Shimamura S."/>
            <person name="Reysenbach A.-L."/>
            <person name="Takai K."/>
            <person name="Horikoshi K."/>
        </authorList>
    </citation>
    <scope>NUCLEOTIDE SEQUENCE [LARGE SCALE GENOMIC DNA]</scope>
    <source>
        <strain>NBC37-1</strain>
    </source>
</reference>
<name>PLSX_SULNB</name>
<dbReference type="EC" id="2.3.1.274" evidence="1"/>
<dbReference type="EMBL" id="AP009179">
    <property type="protein sequence ID" value="BAF72990.1"/>
    <property type="molecule type" value="Genomic_DNA"/>
</dbReference>
<dbReference type="RefSeq" id="WP_012083811.1">
    <property type="nucleotide sequence ID" value="NC_009663.1"/>
</dbReference>
<dbReference type="SMR" id="A6QBY1"/>
<dbReference type="STRING" id="387093.SUN_2049"/>
<dbReference type="KEGG" id="sun:SUN_2049"/>
<dbReference type="eggNOG" id="COG0416">
    <property type="taxonomic scope" value="Bacteria"/>
</dbReference>
<dbReference type="HOGENOM" id="CLU_039379_1_1_7"/>
<dbReference type="OrthoDB" id="9806408at2"/>
<dbReference type="UniPathway" id="UPA00085"/>
<dbReference type="Proteomes" id="UP000006378">
    <property type="component" value="Chromosome"/>
</dbReference>
<dbReference type="GO" id="GO:0005737">
    <property type="term" value="C:cytoplasm"/>
    <property type="evidence" value="ECO:0007669"/>
    <property type="project" value="UniProtKB-SubCell"/>
</dbReference>
<dbReference type="GO" id="GO:0043811">
    <property type="term" value="F:phosphate:acyl-[acyl carrier protein] acyltransferase activity"/>
    <property type="evidence" value="ECO:0007669"/>
    <property type="project" value="UniProtKB-UniRule"/>
</dbReference>
<dbReference type="GO" id="GO:0006633">
    <property type="term" value="P:fatty acid biosynthetic process"/>
    <property type="evidence" value="ECO:0007669"/>
    <property type="project" value="UniProtKB-UniRule"/>
</dbReference>
<dbReference type="GO" id="GO:0008654">
    <property type="term" value="P:phospholipid biosynthetic process"/>
    <property type="evidence" value="ECO:0007669"/>
    <property type="project" value="UniProtKB-KW"/>
</dbReference>
<dbReference type="Gene3D" id="3.40.718.10">
    <property type="entry name" value="Isopropylmalate Dehydrogenase"/>
    <property type="match status" value="1"/>
</dbReference>
<dbReference type="HAMAP" id="MF_00019">
    <property type="entry name" value="PlsX"/>
    <property type="match status" value="1"/>
</dbReference>
<dbReference type="InterPro" id="IPR003664">
    <property type="entry name" value="FA_synthesis"/>
</dbReference>
<dbReference type="InterPro" id="IPR012281">
    <property type="entry name" value="Phospholipid_synth_PlsX-like"/>
</dbReference>
<dbReference type="NCBIfam" id="TIGR00182">
    <property type="entry name" value="plsX"/>
    <property type="match status" value="1"/>
</dbReference>
<dbReference type="PANTHER" id="PTHR30100">
    <property type="entry name" value="FATTY ACID/PHOSPHOLIPID SYNTHESIS PROTEIN PLSX"/>
    <property type="match status" value="1"/>
</dbReference>
<dbReference type="PANTHER" id="PTHR30100:SF1">
    <property type="entry name" value="PHOSPHATE ACYLTRANSFERASE"/>
    <property type="match status" value="1"/>
</dbReference>
<dbReference type="Pfam" id="PF02504">
    <property type="entry name" value="FA_synthesis"/>
    <property type="match status" value="1"/>
</dbReference>
<dbReference type="PIRSF" id="PIRSF002465">
    <property type="entry name" value="Phsphlp_syn_PlsX"/>
    <property type="match status" value="1"/>
</dbReference>
<dbReference type="SUPFAM" id="SSF53659">
    <property type="entry name" value="Isocitrate/Isopropylmalate dehydrogenase-like"/>
    <property type="match status" value="1"/>
</dbReference>
<protein>
    <recommendedName>
        <fullName evidence="1">Phosphate acyltransferase</fullName>
        <ecNumber evidence="1">2.3.1.274</ecNumber>
    </recommendedName>
    <alternativeName>
        <fullName evidence="1">Acyl-ACP phosphotransacylase</fullName>
    </alternativeName>
    <alternativeName>
        <fullName evidence="1">Acyl-[acyl-carrier-protein]--phosphate acyltransferase</fullName>
    </alternativeName>
    <alternativeName>
        <fullName evidence="1">Phosphate-acyl-ACP acyltransferase</fullName>
    </alternativeName>
</protein>
<keyword id="KW-0963">Cytoplasm</keyword>
<keyword id="KW-0444">Lipid biosynthesis</keyword>
<keyword id="KW-0443">Lipid metabolism</keyword>
<keyword id="KW-0594">Phospholipid biosynthesis</keyword>
<keyword id="KW-1208">Phospholipid metabolism</keyword>
<keyword id="KW-0808">Transferase</keyword>
<accession>A6QBY1</accession>
<gene>
    <name evidence="1" type="primary">plsX</name>
    <name type="ordered locus">SUN_2049</name>
</gene>
<proteinExistence type="inferred from homology"/>
<evidence type="ECO:0000255" key="1">
    <source>
        <dbReference type="HAMAP-Rule" id="MF_00019"/>
    </source>
</evidence>
<comment type="function">
    <text evidence="1">Catalyzes the reversible formation of acyl-phosphate (acyl-PO(4)) from acyl-[acyl-carrier-protein] (acyl-ACP). This enzyme utilizes acyl-ACP as fatty acyl donor, but not acyl-CoA.</text>
</comment>
<comment type="catalytic activity">
    <reaction evidence="1">
        <text>a fatty acyl-[ACP] + phosphate = an acyl phosphate + holo-[ACP]</text>
        <dbReference type="Rhea" id="RHEA:42292"/>
        <dbReference type="Rhea" id="RHEA-COMP:9685"/>
        <dbReference type="Rhea" id="RHEA-COMP:14125"/>
        <dbReference type="ChEBI" id="CHEBI:43474"/>
        <dbReference type="ChEBI" id="CHEBI:59918"/>
        <dbReference type="ChEBI" id="CHEBI:64479"/>
        <dbReference type="ChEBI" id="CHEBI:138651"/>
        <dbReference type="EC" id="2.3.1.274"/>
    </reaction>
</comment>
<comment type="pathway">
    <text evidence="1">Lipid metabolism; phospholipid metabolism.</text>
</comment>
<comment type="subunit">
    <text evidence="1">Homodimer. Probably interacts with PlsY.</text>
</comment>
<comment type="subcellular location">
    <subcellularLocation>
        <location evidence="1">Cytoplasm</location>
    </subcellularLocation>
    <text evidence="1">Associated with the membrane possibly through PlsY.</text>
</comment>
<comment type="similarity">
    <text evidence="1">Belongs to the PlsX family.</text>
</comment>